<dbReference type="EMBL" id="CP001638">
    <property type="protein sequence ID" value="ACS24624.1"/>
    <property type="molecule type" value="Genomic_DNA"/>
</dbReference>
<dbReference type="STRING" id="471223.GWCH70_1888"/>
<dbReference type="KEGG" id="gwc:GWCH70_1888"/>
<dbReference type="eggNOG" id="ENOG502ZV6H">
    <property type="taxonomic scope" value="Bacteria"/>
</dbReference>
<dbReference type="HOGENOM" id="CLU_216714_0_0_9"/>
<dbReference type="OrthoDB" id="2455637at2"/>
<dbReference type="GO" id="GO:0042601">
    <property type="term" value="C:endospore-forming forespore"/>
    <property type="evidence" value="ECO:0007669"/>
    <property type="project" value="InterPro"/>
</dbReference>
<dbReference type="GO" id="GO:0030436">
    <property type="term" value="P:asexual sporulation"/>
    <property type="evidence" value="ECO:0007669"/>
    <property type="project" value="UniProtKB-UniRule"/>
</dbReference>
<dbReference type="GO" id="GO:0030435">
    <property type="term" value="P:sporulation resulting in formation of a cellular spore"/>
    <property type="evidence" value="ECO:0007669"/>
    <property type="project" value="UniProtKB-KW"/>
</dbReference>
<dbReference type="HAMAP" id="MF_01505">
    <property type="entry name" value="SspN"/>
    <property type="match status" value="1"/>
</dbReference>
<dbReference type="InterPro" id="IPR012612">
    <property type="entry name" value="SASP_SspN"/>
</dbReference>
<dbReference type="NCBIfam" id="NF006904">
    <property type="entry name" value="PRK09398.1"/>
    <property type="match status" value="1"/>
</dbReference>
<dbReference type="Pfam" id="PF08177">
    <property type="entry name" value="SspN"/>
    <property type="match status" value="1"/>
</dbReference>
<protein>
    <recommendedName>
        <fullName evidence="1">Small, acid-soluble spore protein N</fullName>
        <shortName evidence="1">SASP N</shortName>
    </recommendedName>
</protein>
<name>SSPN_GEOSW</name>
<reference key="1">
    <citation type="submission" date="2009-06" db="EMBL/GenBank/DDBJ databases">
        <title>Complete sequence of chromosome of Geopacillus sp. WCH70.</title>
        <authorList>
            <consortium name="US DOE Joint Genome Institute"/>
            <person name="Lucas S."/>
            <person name="Copeland A."/>
            <person name="Lapidus A."/>
            <person name="Glavina del Rio T."/>
            <person name="Dalin E."/>
            <person name="Tice H."/>
            <person name="Bruce D."/>
            <person name="Goodwin L."/>
            <person name="Pitluck S."/>
            <person name="Chertkov O."/>
            <person name="Brettin T."/>
            <person name="Detter J.C."/>
            <person name="Han C."/>
            <person name="Larimer F."/>
            <person name="Land M."/>
            <person name="Hauser L."/>
            <person name="Kyrpides N."/>
            <person name="Mikhailova N."/>
            <person name="Brumm P."/>
            <person name="Mead D.A."/>
            <person name="Richardson P."/>
        </authorList>
    </citation>
    <scope>NUCLEOTIDE SEQUENCE [LARGE SCALE GENOMIC DNA]</scope>
    <source>
        <strain>WCH70</strain>
    </source>
</reference>
<feature type="chain" id="PRO_1000215331" description="Small, acid-soluble spore protein N">
    <location>
        <begin position="1"/>
        <end position="47"/>
    </location>
</feature>
<feature type="region of interest" description="Disordered" evidence="2">
    <location>
        <begin position="1"/>
        <end position="47"/>
    </location>
</feature>
<feature type="compositionally biased region" description="Polar residues" evidence="2">
    <location>
        <begin position="33"/>
        <end position="47"/>
    </location>
</feature>
<organism>
    <name type="scientific">Geobacillus sp. (strain WCH70)</name>
    <dbReference type="NCBI Taxonomy" id="471223"/>
    <lineage>
        <taxon>Bacteria</taxon>
        <taxon>Bacillati</taxon>
        <taxon>Bacillota</taxon>
        <taxon>Bacilli</taxon>
        <taxon>Bacillales</taxon>
        <taxon>Anoxybacillaceae</taxon>
        <taxon>Geobacillus</taxon>
    </lineage>
</organism>
<accession>C5D2I2</accession>
<sequence length="47" mass="5105">MSNPRGNPKYFNPNHLGTQPRAAGGNKGKKMQDQSGQHAQVIQTKGE</sequence>
<proteinExistence type="inferred from homology"/>
<gene>
    <name evidence="1" type="primary">sspN</name>
    <name type="ordered locus">GWCH70_1888</name>
</gene>
<evidence type="ECO:0000255" key="1">
    <source>
        <dbReference type="HAMAP-Rule" id="MF_01505"/>
    </source>
</evidence>
<evidence type="ECO:0000256" key="2">
    <source>
        <dbReference type="SAM" id="MobiDB-lite"/>
    </source>
</evidence>
<keyword id="KW-0749">Sporulation</keyword>
<comment type="subcellular location">
    <subcellularLocation>
        <location evidence="1">Spore core</location>
    </subcellularLocation>
</comment>
<comment type="induction">
    <text evidence="1">Expressed only in the forespore compartment of sporulating cells.</text>
</comment>
<comment type="similarity">
    <text evidence="1">Belongs to the SspN family.</text>
</comment>